<gene>
    <name evidence="7" type="primary">Poll</name>
    <name evidence="5" type="synonym">Polk</name>
</gene>
<reference key="1">
    <citation type="submission" date="1998-12" db="EMBL/GenBank/DDBJ databases">
        <title>DNA polymerase kappa, a new mammalian meiotic polymerase.</title>
        <authorList>
            <person name="Garcia M."/>
            <person name="Dominguez O."/>
            <person name="Saniger M.L."/>
            <person name="Garcia M.J."/>
            <person name="Martinez C."/>
            <person name="Bernad A."/>
            <person name="Blanco L."/>
        </authorList>
    </citation>
    <scope>NUCLEOTIDE SEQUENCE [MRNA]</scope>
    <source>
        <tissue>Testis</tissue>
    </source>
</reference>
<reference key="2">
    <citation type="journal article" date="2000" name="Nucleic Acids Res.">
        <title>Two novel human and mouse DNA polymerases of the polX family.</title>
        <authorList>
            <person name="Aoufouchi S."/>
            <person name="Flatter E."/>
            <person name="Dahan A."/>
            <person name="Faili A."/>
            <person name="Bertocci B."/>
            <person name="Storck S."/>
            <person name="Delbos F."/>
            <person name="Cocea L."/>
            <person name="Gupta N."/>
            <person name="Weill J.-C."/>
            <person name="Reynaud C.-A."/>
        </authorList>
    </citation>
    <scope>NUCLEOTIDE SEQUENCE [MRNA]</scope>
    <source>
        <tissue>Spleen</tissue>
    </source>
</reference>
<reference key="3">
    <citation type="journal article" date="2004" name="Genome Res.">
        <title>The status, quality, and expansion of the NIH full-length cDNA project: the Mammalian Gene Collection (MGC).</title>
        <authorList>
            <consortium name="The MGC Project Team"/>
        </authorList>
    </citation>
    <scope>NUCLEOTIDE SEQUENCE [LARGE SCALE MRNA]</scope>
</reference>
<reference key="4">
    <citation type="journal article" date="2005" name="Science">
        <title>The transcriptional landscape of the mammalian genome.</title>
        <authorList>
            <person name="Carninci P."/>
            <person name="Kasukawa T."/>
            <person name="Katayama S."/>
            <person name="Gough J."/>
            <person name="Frith M.C."/>
            <person name="Maeda N."/>
            <person name="Oyama R."/>
            <person name="Ravasi T."/>
            <person name="Lenhard B."/>
            <person name="Wells C."/>
            <person name="Kodzius R."/>
            <person name="Shimokawa K."/>
            <person name="Bajic V.B."/>
            <person name="Brenner S.E."/>
            <person name="Batalov S."/>
            <person name="Forrest A.R."/>
            <person name="Zavolan M."/>
            <person name="Davis M.J."/>
            <person name="Wilming L.G."/>
            <person name="Aidinis V."/>
            <person name="Allen J.E."/>
            <person name="Ambesi-Impiombato A."/>
            <person name="Apweiler R."/>
            <person name="Aturaliya R.N."/>
            <person name="Bailey T.L."/>
            <person name="Bansal M."/>
            <person name="Baxter L."/>
            <person name="Beisel K.W."/>
            <person name="Bersano T."/>
            <person name="Bono H."/>
            <person name="Chalk A.M."/>
            <person name="Chiu K.P."/>
            <person name="Choudhary V."/>
            <person name="Christoffels A."/>
            <person name="Clutterbuck D.R."/>
            <person name="Crowe M.L."/>
            <person name="Dalla E."/>
            <person name="Dalrymple B.P."/>
            <person name="de Bono B."/>
            <person name="Della Gatta G."/>
            <person name="di Bernardo D."/>
            <person name="Down T."/>
            <person name="Engstrom P."/>
            <person name="Fagiolini M."/>
            <person name="Faulkner G."/>
            <person name="Fletcher C.F."/>
            <person name="Fukushima T."/>
            <person name="Furuno M."/>
            <person name="Futaki S."/>
            <person name="Gariboldi M."/>
            <person name="Georgii-Hemming P."/>
            <person name="Gingeras T.R."/>
            <person name="Gojobori T."/>
            <person name="Green R.E."/>
            <person name="Gustincich S."/>
            <person name="Harbers M."/>
            <person name="Hayashi Y."/>
            <person name="Hensch T.K."/>
            <person name="Hirokawa N."/>
            <person name="Hill D."/>
            <person name="Huminiecki L."/>
            <person name="Iacono M."/>
            <person name="Ikeo K."/>
            <person name="Iwama A."/>
            <person name="Ishikawa T."/>
            <person name="Jakt M."/>
            <person name="Kanapin A."/>
            <person name="Katoh M."/>
            <person name="Kawasawa Y."/>
            <person name="Kelso J."/>
            <person name="Kitamura H."/>
            <person name="Kitano H."/>
            <person name="Kollias G."/>
            <person name="Krishnan S.P."/>
            <person name="Kruger A."/>
            <person name="Kummerfeld S.K."/>
            <person name="Kurochkin I.V."/>
            <person name="Lareau L.F."/>
            <person name="Lazarevic D."/>
            <person name="Lipovich L."/>
            <person name="Liu J."/>
            <person name="Liuni S."/>
            <person name="McWilliam S."/>
            <person name="Madan Babu M."/>
            <person name="Madera M."/>
            <person name="Marchionni L."/>
            <person name="Matsuda H."/>
            <person name="Matsuzawa S."/>
            <person name="Miki H."/>
            <person name="Mignone F."/>
            <person name="Miyake S."/>
            <person name="Morris K."/>
            <person name="Mottagui-Tabar S."/>
            <person name="Mulder N."/>
            <person name="Nakano N."/>
            <person name="Nakauchi H."/>
            <person name="Ng P."/>
            <person name="Nilsson R."/>
            <person name="Nishiguchi S."/>
            <person name="Nishikawa S."/>
            <person name="Nori F."/>
            <person name="Ohara O."/>
            <person name="Okazaki Y."/>
            <person name="Orlando V."/>
            <person name="Pang K.C."/>
            <person name="Pavan W.J."/>
            <person name="Pavesi G."/>
            <person name="Pesole G."/>
            <person name="Petrovsky N."/>
            <person name="Piazza S."/>
            <person name="Reed J."/>
            <person name="Reid J.F."/>
            <person name="Ring B.Z."/>
            <person name="Ringwald M."/>
            <person name="Rost B."/>
            <person name="Ruan Y."/>
            <person name="Salzberg S.L."/>
            <person name="Sandelin A."/>
            <person name="Schneider C."/>
            <person name="Schoenbach C."/>
            <person name="Sekiguchi K."/>
            <person name="Semple C.A."/>
            <person name="Seno S."/>
            <person name="Sessa L."/>
            <person name="Sheng Y."/>
            <person name="Shibata Y."/>
            <person name="Shimada H."/>
            <person name="Shimada K."/>
            <person name="Silva D."/>
            <person name="Sinclair B."/>
            <person name="Sperling S."/>
            <person name="Stupka E."/>
            <person name="Sugiura K."/>
            <person name="Sultana R."/>
            <person name="Takenaka Y."/>
            <person name="Taki K."/>
            <person name="Tammoja K."/>
            <person name="Tan S.L."/>
            <person name="Tang S."/>
            <person name="Taylor M.S."/>
            <person name="Tegner J."/>
            <person name="Teichmann S.A."/>
            <person name="Ueda H.R."/>
            <person name="van Nimwegen E."/>
            <person name="Verardo R."/>
            <person name="Wei C.L."/>
            <person name="Yagi K."/>
            <person name="Yamanishi H."/>
            <person name="Zabarovsky E."/>
            <person name="Zhu S."/>
            <person name="Zimmer A."/>
            <person name="Hide W."/>
            <person name="Bult C."/>
            <person name="Grimmond S.M."/>
            <person name="Teasdale R.D."/>
            <person name="Liu E.T."/>
            <person name="Brusic V."/>
            <person name="Quackenbush J."/>
            <person name="Wahlestedt C."/>
            <person name="Mattick J.S."/>
            <person name="Hume D.A."/>
            <person name="Kai C."/>
            <person name="Sasaki D."/>
            <person name="Tomaru Y."/>
            <person name="Fukuda S."/>
            <person name="Kanamori-Katayama M."/>
            <person name="Suzuki M."/>
            <person name="Aoki J."/>
            <person name="Arakawa T."/>
            <person name="Iida J."/>
            <person name="Imamura K."/>
            <person name="Itoh M."/>
            <person name="Kato T."/>
            <person name="Kawaji H."/>
            <person name="Kawagashira N."/>
            <person name="Kawashima T."/>
            <person name="Kojima M."/>
            <person name="Kondo S."/>
            <person name="Konno H."/>
            <person name="Nakano K."/>
            <person name="Ninomiya N."/>
            <person name="Nishio T."/>
            <person name="Okada M."/>
            <person name="Plessy C."/>
            <person name="Shibata K."/>
            <person name="Shiraki T."/>
            <person name="Suzuki S."/>
            <person name="Tagami M."/>
            <person name="Waki K."/>
            <person name="Watahiki A."/>
            <person name="Okamura-Oho Y."/>
            <person name="Suzuki H."/>
            <person name="Kawai J."/>
            <person name="Hayashizaki Y."/>
        </authorList>
    </citation>
    <scope>NUCLEOTIDE SEQUENCE [LARGE SCALE MRNA] OF 262-573</scope>
    <source>
        <strain>C57BL/6J</strain>
        <tissue>Embryo</tissue>
    </source>
</reference>
<protein>
    <recommendedName>
        <fullName evidence="6">DNA polymerase lambda</fullName>
        <shortName evidence="6">Pol Lambda</shortName>
        <ecNumber evidence="2">2.7.7.7</ecNumber>
        <ecNumber evidence="2">4.2.99.-</ecNumber>
    </recommendedName>
    <alternativeName>
        <fullName evidence="5">DNA polymerase kappa</fullName>
    </alternativeName>
</protein>
<name>DPOLL_MOUSE</name>
<sequence length="573" mass="62943">MDPQGIVKAFPKRKKSHADLSSKALAKIPKREVGEARGWLSSLRAHIMPAGIGRARAELFEKQIIHHGGQVCSAQAPGVTHIVVDEDMDYERALRLLRLPQLPPGAQLVKSTWLSLCLQEGRLTDTEGFSLPMPKRSLDEPQPSKSGQDASAPGTQRDLPRTTLSLSPPHTRAVSPPPTAEKPSRTQAQLSSEDETSDGEGPQVSSADLQALITGHYPTPPEEDGGPDPAPEALDKWVCAQPSSQKATNYNLHITEKLEVLAKAYSVQGDKWRALGYAKAINALKSFHKPVSSYQEACSIPGIGKRMAEKVMEILESGHLRKLDHISDSVPVLELFSNIWGAGTKTAQMWYHQGFRNLEDLQSLGSLTAQQAIGLKHYDDFLDRMPREEAAEIEQTVRISAQAFNPGLLCVACGSYRRGKMTCGDVDVLITHPDGRSHRGIFSCLLDSLRQQGFLTDDLVSQEENGQQQKYLGVCRLPGPGKRHRRLDIIVVPYCEFACALLYFTGSAHFNRSMRALAKTKGMSLSEHALSAAVVRNSQGVKVGPGQVLPTPTEKDVFKHLGLPYREPAERDW</sequence>
<comment type="function">
    <text evidence="2">DNA polymerase that functions in several pathways of DNA repair. Involved in base excision repair (BER) responsible for repair of lesions that give rise to abasic (AP) sites in DNA. Also contributes to DNA double-strand break repair by non-homologous end joining and homologous recombination. Has both template-dependent and template-independent (terminal transferase) DNA polymerase activities. Also has a 5'-deoxyribose-5-phosphate lyase (dRP lyase) activity.</text>
</comment>
<comment type="catalytic activity">
    <reaction evidence="2">
        <text>DNA(n) + a 2'-deoxyribonucleoside 5'-triphosphate = DNA(n+1) + diphosphate</text>
        <dbReference type="Rhea" id="RHEA:22508"/>
        <dbReference type="Rhea" id="RHEA-COMP:17339"/>
        <dbReference type="Rhea" id="RHEA-COMP:17340"/>
        <dbReference type="ChEBI" id="CHEBI:33019"/>
        <dbReference type="ChEBI" id="CHEBI:61560"/>
        <dbReference type="ChEBI" id="CHEBI:173112"/>
        <dbReference type="EC" id="2.7.7.7"/>
    </reaction>
</comment>
<comment type="cofactor">
    <cofactor evidence="2">
        <name>Mn(2+)</name>
        <dbReference type="ChEBI" id="CHEBI:29035"/>
    </cofactor>
</comment>
<comment type="subunit">
    <text evidence="2">Interacts with PCNA. Interacts with PAXX; promoting POLL recruitment to double-strand breaks (DSBs) and stimulation of the end-filling activity of POLL. Interacts with XRCC4; promoting POLL recruitment to double-strand breaks (DSBs) and stimulation of the end-filling activity of POLL. Interacts with NHEJ1/XLF; promoting POLL recruitment to double-strand breaks (DSBs) and stimulation of the end-filling activity of POLL.</text>
</comment>
<comment type="subcellular location">
    <subcellularLocation>
        <location evidence="2">Nucleus</location>
    </subcellularLocation>
</comment>
<comment type="similarity">
    <text evidence="6">Belongs to the DNA polymerase type-X family.</text>
</comment>
<accession>Q9QXE2</accession>
<accession>Q9CTJ1</accession>
<proteinExistence type="evidence at transcript level"/>
<keyword id="KW-0227">DNA damage</keyword>
<keyword id="KW-0234">DNA repair</keyword>
<keyword id="KW-0235">DNA replication</keyword>
<keyword id="KW-0237">DNA synthesis</keyword>
<keyword id="KW-0238">DNA-binding</keyword>
<keyword id="KW-0239">DNA-directed DNA polymerase</keyword>
<keyword id="KW-0456">Lyase</keyword>
<keyword id="KW-0464">Manganese</keyword>
<keyword id="KW-0479">Metal-binding</keyword>
<keyword id="KW-0548">Nucleotidyltransferase</keyword>
<keyword id="KW-0539">Nucleus</keyword>
<keyword id="KW-1185">Reference proteome</keyword>
<keyword id="KW-0808">Transferase</keyword>
<organism>
    <name type="scientific">Mus musculus</name>
    <name type="common">Mouse</name>
    <dbReference type="NCBI Taxonomy" id="10090"/>
    <lineage>
        <taxon>Eukaryota</taxon>
        <taxon>Metazoa</taxon>
        <taxon>Chordata</taxon>
        <taxon>Craniata</taxon>
        <taxon>Vertebrata</taxon>
        <taxon>Euteleostomi</taxon>
        <taxon>Mammalia</taxon>
        <taxon>Eutheria</taxon>
        <taxon>Euarchontoglires</taxon>
        <taxon>Glires</taxon>
        <taxon>Rodentia</taxon>
        <taxon>Myomorpha</taxon>
        <taxon>Muroidea</taxon>
        <taxon>Muridae</taxon>
        <taxon>Murinae</taxon>
        <taxon>Mus</taxon>
        <taxon>Mus</taxon>
    </lineage>
</organism>
<evidence type="ECO:0000250" key="1"/>
<evidence type="ECO:0000250" key="2">
    <source>
        <dbReference type="UniProtKB" id="Q9UGP5"/>
    </source>
</evidence>
<evidence type="ECO:0000255" key="3">
    <source>
        <dbReference type="PROSITE-ProRule" id="PRU00033"/>
    </source>
</evidence>
<evidence type="ECO:0000256" key="4">
    <source>
        <dbReference type="SAM" id="MobiDB-lite"/>
    </source>
</evidence>
<evidence type="ECO:0000303" key="5">
    <source ref="1"/>
</evidence>
<evidence type="ECO:0000305" key="6"/>
<evidence type="ECO:0000312" key="7">
    <source>
        <dbReference type="MGI" id="MGI:1889000"/>
    </source>
</evidence>
<feature type="chain" id="PRO_0000218785" description="DNA polymerase lambda">
    <location>
        <begin position="1"/>
        <end position="573"/>
    </location>
</feature>
<feature type="domain" description="BRCT" evidence="3">
    <location>
        <begin position="35"/>
        <end position="131"/>
    </location>
</feature>
<feature type="region of interest" description="Disordered" evidence="4">
    <location>
        <begin position="126"/>
        <end position="204"/>
    </location>
</feature>
<feature type="region of interest" description="Disordered" evidence="4">
    <location>
        <begin position="214"/>
        <end position="233"/>
    </location>
</feature>
<feature type="region of interest" description="DNA-binding" evidence="2">
    <location>
        <begin position="263"/>
        <end position="277"/>
    </location>
</feature>
<feature type="region of interest" description="DNA-binding" evidence="2">
    <location>
        <begin position="343"/>
        <end position="346"/>
    </location>
</feature>
<feature type="region of interest" description="Involved in primer binding" evidence="1">
    <location>
        <begin position="418"/>
        <end position="427"/>
    </location>
</feature>
<feature type="region of interest" description="DNA-binding" evidence="2">
    <location>
        <begin position="464"/>
        <end position="503"/>
    </location>
</feature>
<feature type="active site" description="Schiff-base intermediate with DNA" evidence="2">
    <location>
        <position position="310"/>
    </location>
</feature>
<feature type="binding site" evidence="2">
    <location>
        <position position="384"/>
    </location>
    <ligand>
        <name>dCTP</name>
        <dbReference type="ChEBI" id="CHEBI:61481"/>
    </ligand>
</feature>
<feature type="binding site" evidence="2">
    <location>
        <begin position="415"/>
        <end position="418"/>
    </location>
    <ligand>
        <name>dCTP</name>
        <dbReference type="ChEBI" id="CHEBI:61481"/>
    </ligand>
</feature>
<feature type="binding site" evidence="2">
    <location>
        <begin position="424"/>
        <end position="427"/>
    </location>
    <ligand>
        <name>dCTP</name>
        <dbReference type="ChEBI" id="CHEBI:61481"/>
    </ligand>
</feature>
<feature type="binding site" evidence="2">
    <location>
        <position position="425"/>
    </location>
    <ligand>
        <name>Mn(2+)</name>
        <dbReference type="ChEBI" id="CHEBI:29035"/>
    </ligand>
</feature>
<feature type="binding site" evidence="2">
    <location>
        <position position="427"/>
    </location>
    <ligand>
        <name>Mn(2+)</name>
        <dbReference type="ChEBI" id="CHEBI:29035"/>
    </ligand>
</feature>
<feature type="binding site" evidence="2">
    <location>
        <position position="488"/>
    </location>
    <ligand>
        <name>Mn(2+)</name>
        <dbReference type="ChEBI" id="CHEBI:29035"/>
    </ligand>
</feature>
<feature type="binding site" evidence="2">
    <location>
        <position position="511"/>
    </location>
    <ligand>
        <name>dCTP</name>
        <dbReference type="ChEBI" id="CHEBI:61481"/>
    </ligand>
</feature>
<dbReference type="EC" id="2.7.7.7" evidence="2"/>
<dbReference type="EC" id="4.2.99.-" evidence="2"/>
<dbReference type="EMBL" id="AJ131889">
    <property type="protein sequence ID" value="CAB65241.1"/>
    <property type="molecule type" value="mRNA"/>
</dbReference>
<dbReference type="EMBL" id="AF176099">
    <property type="protein sequence ID" value="AAF27553.1"/>
    <property type="molecule type" value="mRNA"/>
</dbReference>
<dbReference type="EMBL" id="BC004767">
    <property type="protein sequence ID" value="AAH04767.1"/>
    <property type="molecule type" value="mRNA"/>
</dbReference>
<dbReference type="EMBL" id="AK003392">
    <property type="protein sequence ID" value="BAB22759.1"/>
    <property type="molecule type" value="mRNA"/>
</dbReference>
<dbReference type="CCDS" id="CCDS29861.1"/>
<dbReference type="RefSeq" id="NP_001317435.1">
    <property type="nucleotide sequence ID" value="NM_001330506.1"/>
</dbReference>
<dbReference type="RefSeq" id="NP_001317436.1">
    <property type="nucleotide sequence ID" value="NM_001330507.1"/>
</dbReference>
<dbReference type="RefSeq" id="NP_064416.1">
    <property type="nucleotide sequence ID" value="NM_020032.3"/>
</dbReference>
<dbReference type="RefSeq" id="XP_011245603.1">
    <property type="nucleotide sequence ID" value="XM_011247301.2"/>
</dbReference>
<dbReference type="SMR" id="Q9QXE2"/>
<dbReference type="BioGRID" id="208108">
    <property type="interactions" value="1"/>
</dbReference>
<dbReference type="FunCoup" id="Q9QXE2">
    <property type="interactions" value="2004"/>
</dbReference>
<dbReference type="STRING" id="10090.ENSMUSP00000026239"/>
<dbReference type="BindingDB" id="Q9QXE2"/>
<dbReference type="ChEMBL" id="CHEMBL3124737"/>
<dbReference type="GlyGen" id="Q9QXE2">
    <property type="glycosylation" value="1 site"/>
</dbReference>
<dbReference type="iPTMnet" id="Q9QXE2"/>
<dbReference type="PhosphoSitePlus" id="Q9QXE2"/>
<dbReference type="PaxDb" id="10090-ENSMUSP00000026239"/>
<dbReference type="PeptideAtlas" id="Q9QXE2"/>
<dbReference type="ProteomicsDB" id="277390"/>
<dbReference type="Antibodypedia" id="31295">
    <property type="antibodies" value="240 antibodies from 33 providers"/>
</dbReference>
<dbReference type="DNASU" id="56626"/>
<dbReference type="Ensembl" id="ENSMUST00000026239.7">
    <property type="protein sequence ID" value="ENSMUSP00000026239.7"/>
    <property type="gene ID" value="ENSMUSG00000025218.7"/>
</dbReference>
<dbReference type="GeneID" id="56626"/>
<dbReference type="KEGG" id="mmu:56626"/>
<dbReference type="UCSC" id="uc008hrc.1">
    <property type="organism name" value="mouse"/>
</dbReference>
<dbReference type="AGR" id="MGI:1889000"/>
<dbReference type="CTD" id="27343"/>
<dbReference type="MGI" id="MGI:1889000">
    <property type="gene designation" value="Poll"/>
</dbReference>
<dbReference type="VEuPathDB" id="HostDB:ENSMUSG00000025218"/>
<dbReference type="eggNOG" id="KOG2534">
    <property type="taxonomic scope" value="Eukaryota"/>
</dbReference>
<dbReference type="GeneTree" id="ENSGT00940000158515"/>
<dbReference type="HOGENOM" id="CLU_008698_6_1_1"/>
<dbReference type="InParanoid" id="Q9QXE2"/>
<dbReference type="OMA" id="KWHGASA"/>
<dbReference type="OrthoDB" id="205514at2759"/>
<dbReference type="PhylomeDB" id="Q9QXE2"/>
<dbReference type="TreeFam" id="TF103011"/>
<dbReference type="Reactome" id="R-MMU-5693571">
    <property type="pathway name" value="Nonhomologous End-Joining (NHEJ)"/>
</dbReference>
<dbReference type="BioGRID-ORCS" id="56626">
    <property type="hits" value="9 hits in 111 CRISPR screens"/>
</dbReference>
<dbReference type="ChiTaRS" id="Polk">
    <property type="organism name" value="mouse"/>
</dbReference>
<dbReference type="PRO" id="PR:Q9QXE2"/>
<dbReference type="Proteomes" id="UP000000589">
    <property type="component" value="Chromosome 19"/>
</dbReference>
<dbReference type="RNAct" id="Q9QXE2">
    <property type="molecule type" value="protein"/>
</dbReference>
<dbReference type="Bgee" id="ENSMUSG00000025218">
    <property type="expression patterns" value="Expressed in spermatocyte and 190 other cell types or tissues"/>
</dbReference>
<dbReference type="GO" id="GO:0005654">
    <property type="term" value="C:nucleoplasm"/>
    <property type="evidence" value="ECO:0007669"/>
    <property type="project" value="Ensembl"/>
</dbReference>
<dbReference type="GO" id="GO:0035861">
    <property type="term" value="C:site of double-strand break"/>
    <property type="evidence" value="ECO:0000250"/>
    <property type="project" value="UniProtKB"/>
</dbReference>
<dbReference type="GO" id="GO:0051575">
    <property type="term" value="F:5'-deoxyribose-5-phosphate lyase activity"/>
    <property type="evidence" value="ECO:0000250"/>
    <property type="project" value="UniProtKB"/>
</dbReference>
<dbReference type="GO" id="GO:0003677">
    <property type="term" value="F:DNA binding"/>
    <property type="evidence" value="ECO:0007669"/>
    <property type="project" value="UniProtKB-KW"/>
</dbReference>
<dbReference type="GO" id="GO:0003887">
    <property type="term" value="F:DNA-directed DNA polymerase activity"/>
    <property type="evidence" value="ECO:0000314"/>
    <property type="project" value="MGI"/>
</dbReference>
<dbReference type="GO" id="GO:0046872">
    <property type="term" value="F:metal ion binding"/>
    <property type="evidence" value="ECO:0007669"/>
    <property type="project" value="UniProtKB-KW"/>
</dbReference>
<dbReference type="GO" id="GO:0006287">
    <property type="term" value="P:base-excision repair, gap-filling"/>
    <property type="evidence" value="ECO:0000250"/>
    <property type="project" value="UniProtKB"/>
</dbReference>
<dbReference type="GO" id="GO:0006260">
    <property type="term" value="P:DNA replication"/>
    <property type="evidence" value="ECO:0007669"/>
    <property type="project" value="UniProtKB-KW"/>
</dbReference>
<dbReference type="GO" id="GO:0000724">
    <property type="term" value="P:double-strand break repair via homologous recombination"/>
    <property type="evidence" value="ECO:0000250"/>
    <property type="project" value="UniProtKB"/>
</dbReference>
<dbReference type="GO" id="GO:0006303">
    <property type="term" value="P:double-strand break repair via nonhomologous end joining"/>
    <property type="evidence" value="ECO:0000250"/>
    <property type="project" value="UniProtKB"/>
</dbReference>
<dbReference type="GO" id="GO:0006289">
    <property type="term" value="P:nucleotide-excision repair"/>
    <property type="evidence" value="ECO:0000250"/>
    <property type="project" value="UniProtKB"/>
</dbReference>
<dbReference type="CDD" id="cd17715">
    <property type="entry name" value="BRCT_polymerase_lambda"/>
    <property type="match status" value="1"/>
</dbReference>
<dbReference type="CDD" id="cd00141">
    <property type="entry name" value="NT_POLXc"/>
    <property type="match status" value="1"/>
</dbReference>
<dbReference type="FunFam" id="3.40.50.10190:FF:000031">
    <property type="entry name" value="DNA polymerase"/>
    <property type="match status" value="1"/>
</dbReference>
<dbReference type="FunFam" id="1.10.150.110:FF:000004">
    <property type="entry name" value="DNA polymerase lambda"/>
    <property type="match status" value="1"/>
</dbReference>
<dbReference type="FunFam" id="1.10.150.20:FF:000010">
    <property type="entry name" value="DNA polymerase lambda"/>
    <property type="match status" value="1"/>
</dbReference>
<dbReference type="FunFam" id="3.30.210.10:FF:000001">
    <property type="entry name" value="DNA polymerase lambda"/>
    <property type="match status" value="1"/>
</dbReference>
<dbReference type="FunFam" id="3.30.460.10:FF:000020">
    <property type="entry name" value="DNA polymerase lambda"/>
    <property type="match status" value="1"/>
</dbReference>
<dbReference type="Gene3D" id="1.10.150.20">
    <property type="entry name" value="5' to 3' exonuclease, C-terminal subdomain"/>
    <property type="match status" value="1"/>
</dbReference>
<dbReference type="Gene3D" id="3.30.460.10">
    <property type="entry name" value="Beta Polymerase, domain 2"/>
    <property type="match status" value="1"/>
</dbReference>
<dbReference type="Gene3D" id="3.40.50.10190">
    <property type="entry name" value="BRCT domain"/>
    <property type="match status" value="1"/>
</dbReference>
<dbReference type="Gene3D" id="1.10.150.110">
    <property type="entry name" value="DNA polymerase beta, N-terminal domain-like"/>
    <property type="match status" value="1"/>
</dbReference>
<dbReference type="Gene3D" id="3.30.210.10">
    <property type="entry name" value="DNA polymerase, thumb domain"/>
    <property type="match status" value="1"/>
</dbReference>
<dbReference type="InterPro" id="IPR001357">
    <property type="entry name" value="BRCT_dom"/>
</dbReference>
<dbReference type="InterPro" id="IPR036420">
    <property type="entry name" value="BRCT_dom_sf"/>
</dbReference>
<dbReference type="InterPro" id="IPR002054">
    <property type="entry name" value="DNA-dir_DNA_pol_X"/>
</dbReference>
<dbReference type="InterPro" id="IPR019843">
    <property type="entry name" value="DNA_pol-X_BS"/>
</dbReference>
<dbReference type="InterPro" id="IPR010996">
    <property type="entry name" value="DNA_pol_b-like_N"/>
</dbReference>
<dbReference type="InterPro" id="IPR028207">
    <property type="entry name" value="DNA_pol_B_palm_palm"/>
</dbReference>
<dbReference type="InterPro" id="IPR018944">
    <property type="entry name" value="DNA_pol_lambd_fingers_domain"/>
</dbReference>
<dbReference type="InterPro" id="IPR027421">
    <property type="entry name" value="DNA_pol_lamdba_lyase_dom_sf"/>
</dbReference>
<dbReference type="InterPro" id="IPR037160">
    <property type="entry name" value="DNA_Pol_thumb_sf"/>
</dbReference>
<dbReference type="InterPro" id="IPR022312">
    <property type="entry name" value="DNA_pol_X"/>
</dbReference>
<dbReference type="InterPro" id="IPR002008">
    <property type="entry name" value="DNA_pol_X_beta-like"/>
</dbReference>
<dbReference type="InterPro" id="IPR043519">
    <property type="entry name" value="NT_sf"/>
</dbReference>
<dbReference type="InterPro" id="IPR029398">
    <property type="entry name" value="PolB_thumb"/>
</dbReference>
<dbReference type="PANTHER" id="PTHR11276:SF28">
    <property type="entry name" value="DNA POLYMERASE LAMBDA"/>
    <property type="match status" value="1"/>
</dbReference>
<dbReference type="PANTHER" id="PTHR11276">
    <property type="entry name" value="DNA POLYMERASE TYPE-X FAMILY MEMBER"/>
    <property type="match status" value="1"/>
</dbReference>
<dbReference type="Pfam" id="PF14792">
    <property type="entry name" value="DNA_pol_B_palm"/>
    <property type="match status" value="1"/>
</dbReference>
<dbReference type="Pfam" id="PF14791">
    <property type="entry name" value="DNA_pol_B_thumb"/>
    <property type="match status" value="1"/>
</dbReference>
<dbReference type="Pfam" id="PF10391">
    <property type="entry name" value="DNA_pol_lambd_f"/>
    <property type="match status" value="1"/>
</dbReference>
<dbReference type="Pfam" id="PF14716">
    <property type="entry name" value="HHH_8"/>
    <property type="match status" value="1"/>
</dbReference>
<dbReference type="PRINTS" id="PR00869">
    <property type="entry name" value="DNAPOLX"/>
</dbReference>
<dbReference type="PRINTS" id="PR00870">
    <property type="entry name" value="DNAPOLXBETA"/>
</dbReference>
<dbReference type="SMART" id="SM00483">
    <property type="entry name" value="POLXc"/>
    <property type="match status" value="1"/>
</dbReference>
<dbReference type="SUPFAM" id="SSF52113">
    <property type="entry name" value="BRCT domain"/>
    <property type="match status" value="1"/>
</dbReference>
<dbReference type="SUPFAM" id="SSF47802">
    <property type="entry name" value="DNA polymerase beta, N-terminal domain-like"/>
    <property type="match status" value="1"/>
</dbReference>
<dbReference type="SUPFAM" id="SSF81301">
    <property type="entry name" value="Nucleotidyltransferase"/>
    <property type="match status" value="1"/>
</dbReference>
<dbReference type="SUPFAM" id="SSF81585">
    <property type="entry name" value="PsbU/PolX domain-like"/>
    <property type="match status" value="1"/>
</dbReference>
<dbReference type="PROSITE" id="PS50172">
    <property type="entry name" value="BRCT"/>
    <property type="match status" value="1"/>
</dbReference>
<dbReference type="PROSITE" id="PS00522">
    <property type="entry name" value="DNA_POLYMERASE_X"/>
    <property type="match status" value="1"/>
</dbReference>